<proteinExistence type="evidence at protein level"/>
<protein>
    <recommendedName>
        <fullName>CCG-binding protein 1</fullName>
        <shortName evidence="5">AtCBP1</shortName>
    </recommendedName>
    <alternativeName>
        <fullName evidence="6">Protein MATERNAL EFFECT EMBRYO ARREST 14</fullName>
    </alternativeName>
</protein>
<comment type="function">
    <text evidence="2 3">Required for the development of the one-cell zygote and endosperm in embryos (PubMed:15634699). Required for micropylar pollen tube guidance, but has no effect on ovule development and gametophytic cell fate specification. May connect transcription factors and the Pol II machinery to regulate pollen tube attraction, via its interactions with AGAMOUS-like (AGL) transcription factors, MEE14/CCG and the Mediator complex (PubMed:26462908).</text>
</comment>
<comment type="subunit">
    <text evidence="3">Homotetramer (PubMed:26462908). Interacts with MEE12/CCG, MED7A, MED7B, MED9, AGL49, AGL53, AGL75, AGL80, AGL81, AGL82, AGL103 and NRPB1 (via CTD) (PubMed:26462908).</text>
</comment>
<comment type="subcellular location">
    <subcellularLocation>
        <location evidence="3">Nucleus</location>
    </subcellularLocation>
    <subcellularLocation>
        <location evidence="3">Cytoplasm</location>
    </subcellularLocation>
</comment>
<comment type="alternative products">
    <event type="alternative splicing"/>
    <isoform>
        <id>Q9XIM0-1</id>
        <name>1</name>
        <name evidence="5">CBP1.1</name>
        <sequence type="displayed"/>
    </isoform>
    <isoform>
        <id>Q9XIM0-2</id>
        <name>2</name>
        <name evidence="5">CBP1.2</name>
        <sequence type="described" ref="VSP_058072"/>
    </isoform>
</comment>
<comment type="tissue specificity">
    <text evidence="3">Expressed in roots, leaves, stems and flowers. Expressed in the central cell of mature ovules.</text>
</comment>
<comment type="disruption phenotype">
    <text evidence="7">Disrupted function of the female gametophyte. Defective in micropylar pollen tube guidance leading to zygotic lethality.</text>
</comment>
<reference key="1">
    <citation type="journal article" date="1999" name="Nature">
        <title>Sequence and analysis of chromosome 2 of the plant Arabidopsis thaliana.</title>
        <authorList>
            <person name="Lin X."/>
            <person name="Kaul S."/>
            <person name="Rounsley S.D."/>
            <person name="Shea T.P."/>
            <person name="Benito M.-I."/>
            <person name="Town C.D."/>
            <person name="Fujii C.Y."/>
            <person name="Mason T.M."/>
            <person name="Bowman C.L."/>
            <person name="Barnstead M.E."/>
            <person name="Feldblyum T.V."/>
            <person name="Buell C.R."/>
            <person name="Ketchum K.A."/>
            <person name="Lee J.J."/>
            <person name="Ronning C.M."/>
            <person name="Koo H.L."/>
            <person name="Moffat K.S."/>
            <person name="Cronin L.A."/>
            <person name="Shen M."/>
            <person name="Pai G."/>
            <person name="Van Aken S."/>
            <person name="Umayam L."/>
            <person name="Tallon L.J."/>
            <person name="Gill J.E."/>
            <person name="Adams M.D."/>
            <person name="Carrera A.J."/>
            <person name="Creasy T.H."/>
            <person name="Goodman H.M."/>
            <person name="Somerville C.R."/>
            <person name="Copenhaver G.P."/>
            <person name="Preuss D."/>
            <person name="Nierman W.C."/>
            <person name="White O."/>
            <person name="Eisen J.A."/>
            <person name="Salzberg S.L."/>
            <person name="Fraser C.M."/>
            <person name="Venter J.C."/>
        </authorList>
    </citation>
    <scope>NUCLEOTIDE SEQUENCE [LARGE SCALE GENOMIC DNA]</scope>
    <source>
        <strain>cv. Columbia</strain>
    </source>
</reference>
<reference key="2">
    <citation type="journal article" date="2017" name="Plant J.">
        <title>Araport11: a complete reannotation of the Arabidopsis thaliana reference genome.</title>
        <authorList>
            <person name="Cheng C.Y."/>
            <person name="Krishnakumar V."/>
            <person name="Chan A.P."/>
            <person name="Thibaud-Nissen F."/>
            <person name="Schobel S."/>
            <person name="Town C.D."/>
        </authorList>
    </citation>
    <scope>GENOME REANNOTATION</scope>
    <source>
        <strain>cv. Columbia</strain>
    </source>
</reference>
<reference key="3">
    <citation type="journal article" date="2003" name="Science">
        <title>Empirical analysis of transcriptional activity in the Arabidopsis genome.</title>
        <authorList>
            <person name="Yamada K."/>
            <person name="Lim J."/>
            <person name="Dale J.M."/>
            <person name="Chen H."/>
            <person name="Shinn P."/>
            <person name="Palm C.J."/>
            <person name="Southwick A.M."/>
            <person name="Wu H.C."/>
            <person name="Kim C.J."/>
            <person name="Nguyen M."/>
            <person name="Pham P.K."/>
            <person name="Cheuk R.F."/>
            <person name="Karlin-Newmann G."/>
            <person name="Liu S.X."/>
            <person name="Lam B."/>
            <person name="Sakano H."/>
            <person name="Wu T."/>
            <person name="Yu G."/>
            <person name="Miranda M."/>
            <person name="Quach H.L."/>
            <person name="Tripp M."/>
            <person name="Chang C.H."/>
            <person name="Lee J.M."/>
            <person name="Toriumi M.J."/>
            <person name="Chan M.M."/>
            <person name="Tang C.C."/>
            <person name="Onodera C.S."/>
            <person name="Deng J.M."/>
            <person name="Akiyama K."/>
            <person name="Ansari Y."/>
            <person name="Arakawa T."/>
            <person name="Banh J."/>
            <person name="Banno F."/>
            <person name="Bowser L."/>
            <person name="Brooks S.Y."/>
            <person name="Carninci P."/>
            <person name="Chao Q."/>
            <person name="Choy N."/>
            <person name="Enju A."/>
            <person name="Goldsmith A.D."/>
            <person name="Gurjal M."/>
            <person name="Hansen N.F."/>
            <person name="Hayashizaki Y."/>
            <person name="Johnson-Hopson C."/>
            <person name="Hsuan V.W."/>
            <person name="Iida K."/>
            <person name="Karnes M."/>
            <person name="Khan S."/>
            <person name="Koesema E."/>
            <person name="Ishida J."/>
            <person name="Jiang P.X."/>
            <person name="Jones T."/>
            <person name="Kawai J."/>
            <person name="Kamiya A."/>
            <person name="Meyers C."/>
            <person name="Nakajima M."/>
            <person name="Narusaka M."/>
            <person name="Seki M."/>
            <person name="Sakurai T."/>
            <person name="Satou M."/>
            <person name="Tamse R."/>
            <person name="Vaysberg M."/>
            <person name="Wallender E.K."/>
            <person name="Wong C."/>
            <person name="Yamamura Y."/>
            <person name="Yuan S."/>
            <person name="Shinozaki K."/>
            <person name="Davis R.W."/>
            <person name="Theologis A."/>
            <person name="Ecker J.R."/>
        </authorList>
    </citation>
    <scope>NUCLEOTIDE SEQUENCE [LARGE SCALE MRNA]</scope>
    <source>
        <strain>cv. Columbia</strain>
    </source>
</reference>
<reference key="4">
    <citation type="submission" date="2002-03" db="EMBL/GenBank/DDBJ databases">
        <title>Full-length cDNA from Arabidopsis thaliana.</title>
        <authorList>
            <person name="Brover V.V."/>
            <person name="Troukhan M.E."/>
            <person name="Alexandrov N.A."/>
            <person name="Lu Y.-P."/>
            <person name="Flavell R.B."/>
            <person name="Feldmann K.A."/>
        </authorList>
    </citation>
    <scope>NUCLEOTIDE SEQUENCE [LARGE SCALE MRNA]</scope>
</reference>
<reference key="5">
    <citation type="journal article" date="2005" name="Development">
        <title>Genetic and molecular identification of genes required for female gametophyte development and function in Arabidopsis.</title>
        <authorList>
            <person name="Pagnussat G.C."/>
            <person name="Yu H.-J."/>
            <person name="Ngo Q.A."/>
            <person name="Rajani S."/>
            <person name="Mayalagu S."/>
            <person name="Johnson C.S."/>
            <person name="Capron A."/>
            <person name="Xie L.-F."/>
            <person name="Ye D."/>
            <person name="Sundaresan V."/>
        </authorList>
    </citation>
    <scope>FUNCTION</scope>
</reference>
<reference key="6">
    <citation type="journal article" date="2015" name="Plant Cell">
        <title>Arabidopsis CBP1 is a novel regulator of transcription initiation in central cell-mediated pollen tube guidance.</title>
        <authorList>
            <person name="Li H.J."/>
            <person name="Zhu S.S."/>
            <person name="Zhang M.X."/>
            <person name="Wang T."/>
            <person name="Liang L."/>
            <person name="Xue Y."/>
            <person name="Shi D.Q."/>
            <person name="Liu J."/>
            <person name="Yang W.C."/>
        </authorList>
    </citation>
    <scope>FUNCTION</scope>
    <scope>SUBUNIT</scope>
    <scope>INTERACTION WITH MEE12/CCG; MED7A; MED7B; MED9; AGL49; AGL53; AGL75; AGL80; AGL81; AGL82; AGL103 AND NRPB1</scope>
    <scope>SUBCELLULAR LOCATION</scope>
    <scope>ALTERNATIVE SPLICING</scope>
    <scope>TISSUE SPECIFICITY</scope>
    <scope>DISRUPTION PHENOTYPE</scope>
</reference>
<keyword id="KW-0025">Alternative splicing</keyword>
<keyword id="KW-0963">Cytoplasm</keyword>
<keyword id="KW-0539">Nucleus</keyword>
<keyword id="KW-1185">Reference proteome</keyword>
<dbReference type="EMBL" id="AC006438">
    <property type="protein sequence ID" value="AAD41977.1"/>
    <property type="molecule type" value="Genomic_DNA"/>
</dbReference>
<dbReference type="EMBL" id="CP002685">
    <property type="protein sequence ID" value="AEC06444.1"/>
    <property type="molecule type" value="Genomic_DNA"/>
</dbReference>
<dbReference type="EMBL" id="CP002685">
    <property type="protein sequence ID" value="AEC06445.1"/>
    <property type="molecule type" value="Genomic_DNA"/>
</dbReference>
<dbReference type="EMBL" id="AF324713">
    <property type="protein sequence ID" value="AAG40064.1"/>
    <property type="molecule type" value="mRNA"/>
</dbReference>
<dbReference type="EMBL" id="AF339730">
    <property type="protein sequence ID" value="AAK00412.1"/>
    <property type="molecule type" value="mRNA"/>
</dbReference>
<dbReference type="EMBL" id="AY065086">
    <property type="protein sequence ID" value="AAL38262.1"/>
    <property type="molecule type" value="mRNA"/>
</dbReference>
<dbReference type="EMBL" id="BT008445">
    <property type="protein sequence ID" value="AAP37804.1"/>
    <property type="molecule type" value="mRNA"/>
</dbReference>
<dbReference type="EMBL" id="AY086954">
    <property type="protein sequence ID" value="AAM64517.1"/>
    <property type="molecule type" value="mRNA"/>
</dbReference>
<dbReference type="PIR" id="D84534">
    <property type="entry name" value="D84534"/>
</dbReference>
<dbReference type="RefSeq" id="NP_001077895.1">
    <molecule id="Q9XIM0-2"/>
    <property type="nucleotide sequence ID" value="NM_001084426.1"/>
</dbReference>
<dbReference type="RefSeq" id="NP_565383.1">
    <molecule id="Q9XIM0-1"/>
    <property type="nucleotide sequence ID" value="NM_127149.4"/>
</dbReference>
<dbReference type="FunCoup" id="Q9XIM0">
    <property type="interactions" value="226"/>
</dbReference>
<dbReference type="STRING" id="3702.Q9XIM0"/>
<dbReference type="PaxDb" id="3702-AT2G15890.1"/>
<dbReference type="ProteomicsDB" id="228856">
    <molecule id="Q9XIM0-1"/>
</dbReference>
<dbReference type="EnsemblPlants" id="AT2G15890.1">
    <molecule id="Q9XIM0-1"/>
    <property type="protein sequence ID" value="AT2G15890.1"/>
    <property type="gene ID" value="AT2G15890"/>
</dbReference>
<dbReference type="EnsemblPlants" id="AT2G15890.2">
    <molecule id="Q9XIM0-2"/>
    <property type="protein sequence ID" value="AT2G15890.2"/>
    <property type="gene ID" value="AT2G15890"/>
</dbReference>
<dbReference type="GeneID" id="816085"/>
<dbReference type="Gramene" id="AT2G15890.1">
    <molecule id="Q9XIM0-1"/>
    <property type="protein sequence ID" value="AT2G15890.1"/>
    <property type="gene ID" value="AT2G15890"/>
</dbReference>
<dbReference type="Gramene" id="AT2G15890.2">
    <molecule id="Q9XIM0-2"/>
    <property type="protein sequence ID" value="AT2G15890.2"/>
    <property type="gene ID" value="AT2G15890"/>
</dbReference>
<dbReference type="KEGG" id="ath:AT2G15890"/>
<dbReference type="Araport" id="AT2G15890"/>
<dbReference type="TAIR" id="AT2G15890">
    <property type="gene designation" value="MEE14"/>
</dbReference>
<dbReference type="eggNOG" id="ENOG502RXHM">
    <property type="taxonomic scope" value="Eukaryota"/>
</dbReference>
<dbReference type="InParanoid" id="Q9XIM0"/>
<dbReference type="OMA" id="QKCENEL"/>
<dbReference type="PhylomeDB" id="Q9XIM0"/>
<dbReference type="PRO" id="PR:Q9XIM0"/>
<dbReference type="Proteomes" id="UP000006548">
    <property type="component" value="Chromosome 2"/>
</dbReference>
<dbReference type="ExpressionAtlas" id="Q9XIM0">
    <property type="expression patterns" value="baseline and differential"/>
</dbReference>
<dbReference type="GO" id="GO:0009507">
    <property type="term" value="C:chloroplast"/>
    <property type="evidence" value="ECO:0007005"/>
    <property type="project" value="TAIR"/>
</dbReference>
<dbReference type="GO" id="GO:0005829">
    <property type="term" value="C:cytosol"/>
    <property type="evidence" value="ECO:0000314"/>
    <property type="project" value="TAIR"/>
</dbReference>
<dbReference type="GO" id="GO:0005634">
    <property type="term" value="C:nucleus"/>
    <property type="evidence" value="ECO:0000314"/>
    <property type="project" value="TAIR"/>
</dbReference>
<dbReference type="GO" id="GO:0036033">
    <property type="term" value="F:mediator complex binding"/>
    <property type="evidence" value="ECO:0000353"/>
    <property type="project" value="TAIR"/>
</dbReference>
<dbReference type="GO" id="GO:0071456">
    <property type="term" value="P:cellular response to hypoxia"/>
    <property type="evidence" value="ECO:0007007"/>
    <property type="project" value="TAIR"/>
</dbReference>
<dbReference type="GO" id="GO:0050832">
    <property type="term" value="P:defense response to fungus"/>
    <property type="evidence" value="ECO:0000270"/>
    <property type="project" value="TAIR"/>
</dbReference>
<dbReference type="GO" id="GO:0009793">
    <property type="term" value="P:embryo development ending in seed dormancy"/>
    <property type="evidence" value="ECO:0000315"/>
    <property type="project" value="TAIR"/>
</dbReference>
<dbReference type="GO" id="GO:0010183">
    <property type="term" value="P:pollen tube guidance"/>
    <property type="evidence" value="ECO:0000315"/>
    <property type="project" value="TAIR"/>
</dbReference>
<dbReference type="InterPro" id="IPR037502">
    <property type="entry name" value="CBP1"/>
</dbReference>
<dbReference type="PANTHER" id="PTHR36345">
    <property type="entry name" value="CCG-BINDING PROTEIN 1"/>
    <property type="match status" value="1"/>
</dbReference>
<dbReference type="PANTHER" id="PTHR36345:SF1">
    <property type="entry name" value="CCG-BINDING PROTEIN 1"/>
    <property type="match status" value="1"/>
</dbReference>
<evidence type="ECO:0000256" key="1">
    <source>
        <dbReference type="SAM" id="MobiDB-lite"/>
    </source>
</evidence>
<evidence type="ECO:0000269" key="2">
    <source>
    </source>
</evidence>
<evidence type="ECO:0000269" key="3">
    <source>
    </source>
</evidence>
<evidence type="ECO:0000303" key="4">
    <source>
    </source>
</evidence>
<evidence type="ECO:0000303" key="5">
    <source>
    </source>
</evidence>
<evidence type="ECO:0000305" key="6"/>
<evidence type="ECO:0000305" key="7">
    <source>
    </source>
</evidence>
<evidence type="ECO:0000312" key="8">
    <source>
        <dbReference type="Araport" id="AT2G15890"/>
    </source>
</evidence>
<organism>
    <name type="scientific">Arabidopsis thaliana</name>
    <name type="common">Mouse-ear cress</name>
    <dbReference type="NCBI Taxonomy" id="3702"/>
    <lineage>
        <taxon>Eukaryota</taxon>
        <taxon>Viridiplantae</taxon>
        <taxon>Streptophyta</taxon>
        <taxon>Embryophyta</taxon>
        <taxon>Tracheophyta</taxon>
        <taxon>Spermatophyta</taxon>
        <taxon>Magnoliopsida</taxon>
        <taxon>eudicotyledons</taxon>
        <taxon>Gunneridae</taxon>
        <taxon>Pentapetalae</taxon>
        <taxon>rosids</taxon>
        <taxon>malvids</taxon>
        <taxon>Brassicales</taxon>
        <taxon>Brassicaceae</taxon>
        <taxon>Camelineae</taxon>
        <taxon>Arabidopsis</taxon>
    </lineage>
</organism>
<name>MEE14_ARATH</name>
<gene>
    <name evidence="4" type="primary">MEE14</name>
    <name evidence="5" type="synonym">CBP1</name>
    <name evidence="8" type="ordered locus">At2g15890</name>
</gene>
<feature type="chain" id="PRO_0000435411" description="CCG-binding protein 1">
    <location>
        <begin position="1"/>
        <end position="203"/>
    </location>
</feature>
<feature type="region of interest" description="Disordered" evidence="1">
    <location>
        <begin position="156"/>
        <end position="178"/>
    </location>
</feature>
<feature type="compositionally biased region" description="Basic and acidic residues" evidence="1">
    <location>
        <begin position="161"/>
        <end position="175"/>
    </location>
</feature>
<feature type="splice variant" id="VSP_058072" description="In isoform 2.">
    <location>
        <begin position="113"/>
        <end position="140"/>
    </location>
</feature>
<sequence>MIKSVTLRSFHLPIEFNDTKFVSRPCFLARSFPVVRCSSTRDVPKLELFSRGKFDRILQDPPLIEKAESELSDYCSTLEGDDSYSCWRAYFELKDLEREKPKVEVENLILQTGGLKSLIGCLHGVASMEKDNKTKNGLHVGEESDREKGMNLHIHIPDGLPKSEQELEEEEKSKMPDSAFTRLLRSKGTIPAWFSHAPDHETD</sequence>
<accession>Q9XIM0</accession>
<accession>A8MQE2</accession>